<organism>
    <name type="scientific">Candida albicans (strain SC5314 / ATCC MYA-2876)</name>
    <name type="common">Yeast</name>
    <dbReference type="NCBI Taxonomy" id="237561"/>
    <lineage>
        <taxon>Eukaryota</taxon>
        <taxon>Fungi</taxon>
        <taxon>Dikarya</taxon>
        <taxon>Ascomycota</taxon>
        <taxon>Saccharomycotina</taxon>
        <taxon>Pichiomycetes</taxon>
        <taxon>Debaryomycetaceae</taxon>
        <taxon>Candida/Lodderomyces clade</taxon>
        <taxon>Candida</taxon>
    </lineage>
</organism>
<sequence>MDDFDRDLDNELEFSHKSTKGIKVHRTFESMNLKPDLLKGIYAYGFETPSAIQSRAIMQIISGRDTIAQAQSGTGKTATFSIGMLEVIDTKSKECQALILSPTRELAIQIQNVVKHLGDYMNIHTHACIGGKNVGEDVKKLQQGQQIVSGTPGRVIDVIKRRNLQTRNIKVLILDEADELFTKGFKEQIYEIYKHLPPSVQVVVVSATLPREVLEMTSKFTTDPVKILVKRDEISLSGIKQYYVQCEREDWKFDTLCDLYDNLTITQAVIFCNTKLKVNWLADQMKKQNFTVVAMHGDMKQDERDSIMNDFRRGNSRVLISTDVWARGIDVQQVSLVINYDLPTDKENYIHRIGRSGRFGRKGTAINLITKDDVVTLKEFEKYYSTKIKEMPMNINDIM</sequence>
<name>FAL1_CANAL</name>
<feature type="chain" id="PRO_0000232143" description="ATP-dependent RNA helicase FAL1">
    <location>
        <begin position="1"/>
        <end position="399"/>
    </location>
</feature>
<feature type="domain" description="Helicase ATP-binding" evidence="2">
    <location>
        <begin position="57"/>
        <end position="227"/>
    </location>
</feature>
<feature type="domain" description="Helicase C-terminal" evidence="3">
    <location>
        <begin position="238"/>
        <end position="399"/>
    </location>
</feature>
<feature type="short sequence motif" description="Q motif">
    <location>
        <begin position="26"/>
        <end position="54"/>
    </location>
</feature>
<feature type="short sequence motif" description="DEAD box">
    <location>
        <begin position="175"/>
        <end position="178"/>
    </location>
</feature>
<feature type="binding site" evidence="2">
    <location>
        <begin position="70"/>
        <end position="77"/>
    </location>
    <ligand>
        <name>ATP</name>
        <dbReference type="ChEBI" id="CHEBI:30616"/>
    </ligand>
</feature>
<feature type="sequence conflict" description="In Ref. 1; CAB61567." evidence="4" ref="1">
    <original>T</original>
    <variation>A</variation>
    <location>
        <position position="48"/>
    </location>
</feature>
<feature type="sequence conflict" description="In Ref. 1; CAB61567." evidence="4" ref="1">
    <original>K</original>
    <variation>M</variation>
    <location>
        <position position="115"/>
    </location>
</feature>
<feature type="sequence conflict" description="In Ref. 1; CAB61567." evidence="4" ref="1">
    <original>F</original>
    <variation>L</variation>
    <location>
        <position position="380"/>
    </location>
</feature>
<comment type="function">
    <text evidence="1">ATP-dependent RNA helicase involved in 40S ribosomal subunit biogenesis. Required for the processing and cleavage of 35S pre-rRNA at sites A0, A1, and A2, leading to mature 18S rRNA (By similarity).</text>
</comment>
<comment type="catalytic activity">
    <reaction>
        <text>ATP + H2O = ADP + phosphate + H(+)</text>
        <dbReference type="Rhea" id="RHEA:13065"/>
        <dbReference type="ChEBI" id="CHEBI:15377"/>
        <dbReference type="ChEBI" id="CHEBI:15378"/>
        <dbReference type="ChEBI" id="CHEBI:30616"/>
        <dbReference type="ChEBI" id="CHEBI:43474"/>
        <dbReference type="ChEBI" id="CHEBI:456216"/>
        <dbReference type="EC" id="3.6.4.13"/>
    </reaction>
</comment>
<comment type="subcellular location">
    <subcellularLocation>
        <location evidence="1">Nucleus</location>
        <location evidence="1">Nucleolus</location>
    </subcellularLocation>
</comment>
<comment type="domain">
    <text>The Q motif is unique to and characteristic of the DEAD box family of RNA helicases and controls ATP binding and hydrolysis.</text>
</comment>
<comment type="similarity">
    <text evidence="4">Belongs to the DEAD box helicase family. DDX48/FAL1 subfamily.</text>
</comment>
<dbReference type="EC" id="3.6.4.13"/>
<dbReference type="EMBL" id="AJ250879">
    <property type="protein sequence ID" value="CAB61567.1"/>
    <property type="molecule type" value="Genomic_DNA"/>
</dbReference>
<dbReference type="EMBL" id="CP017623">
    <property type="protein sequence ID" value="AOW26229.1"/>
    <property type="molecule type" value="Genomic_DNA"/>
</dbReference>
<dbReference type="RefSeq" id="XP_718509.1">
    <property type="nucleotide sequence ID" value="XM_713416.1"/>
</dbReference>
<dbReference type="SMR" id="Q5A9Z6"/>
<dbReference type="FunCoup" id="Q5A9Z6">
    <property type="interactions" value="705"/>
</dbReference>
<dbReference type="STRING" id="237561.Q5A9Z6"/>
<dbReference type="EnsemblFungi" id="C1_05640C_A-T">
    <property type="protein sequence ID" value="C1_05640C_A-T-p1"/>
    <property type="gene ID" value="C1_05640C_A"/>
</dbReference>
<dbReference type="GeneID" id="3639839"/>
<dbReference type="KEGG" id="cal:CAALFM_C105640CA"/>
<dbReference type="CGD" id="CAL0000189056">
    <property type="gene designation" value="FAL1"/>
</dbReference>
<dbReference type="VEuPathDB" id="FungiDB:C1_05640C_A"/>
<dbReference type="eggNOG" id="KOG0328">
    <property type="taxonomic scope" value="Eukaryota"/>
</dbReference>
<dbReference type="HOGENOM" id="CLU_003041_1_0_1"/>
<dbReference type="InParanoid" id="Q5A9Z6"/>
<dbReference type="OrthoDB" id="10265785at2759"/>
<dbReference type="PRO" id="PR:Q5A9Z6"/>
<dbReference type="Proteomes" id="UP000000559">
    <property type="component" value="Chromosome 1"/>
</dbReference>
<dbReference type="GO" id="GO:0071013">
    <property type="term" value="C:catalytic step 2 spliceosome"/>
    <property type="evidence" value="ECO:0000318"/>
    <property type="project" value="GO_Central"/>
</dbReference>
<dbReference type="GO" id="GO:0097078">
    <property type="term" value="C:FAL1-SGD1 complex"/>
    <property type="evidence" value="ECO:0007669"/>
    <property type="project" value="EnsemblFungi"/>
</dbReference>
<dbReference type="GO" id="GO:0005730">
    <property type="term" value="C:nucleolus"/>
    <property type="evidence" value="ECO:0000318"/>
    <property type="project" value="GO_Central"/>
</dbReference>
<dbReference type="GO" id="GO:0030688">
    <property type="term" value="C:preribosome, small subunit precursor"/>
    <property type="evidence" value="ECO:0007669"/>
    <property type="project" value="EnsemblFungi"/>
</dbReference>
<dbReference type="GO" id="GO:0032040">
    <property type="term" value="C:small-subunit processome"/>
    <property type="evidence" value="ECO:0007669"/>
    <property type="project" value="EnsemblFungi"/>
</dbReference>
<dbReference type="GO" id="GO:0005524">
    <property type="term" value="F:ATP binding"/>
    <property type="evidence" value="ECO:0007669"/>
    <property type="project" value="UniProtKB-KW"/>
</dbReference>
<dbReference type="GO" id="GO:0016887">
    <property type="term" value="F:ATP hydrolysis activity"/>
    <property type="evidence" value="ECO:0007669"/>
    <property type="project" value="RHEA"/>
</dbReference>
<dbReference type="GO" id="GO:0003729">
    <property type="term" value="F:mRNA binding"/>
    <property type="evidence" value="ECO:0000318"/>
    <property type="project" value="GO_Central"/>
</dbReference>
<dbReference type="GO" id="GO:0003724">
    <property type="term" value="F:RNA helicase activity"/>
    <property type="evidence" value="ECO:0000318"/>
    <property type="project" value="GO_Central"/>
</dbReference>
<dbReference type="GO" id="GO:0000462">
    <property type="term" value="P:maturation of SSU-rRNA from tricistronic rRNA transcript (SSU-rRNA, 5.8S rRNA, LSU-rRNA)"/>
    <property type="evidence" value="ECO:0007669"/>
    <property type="project" value="EnsemblFungi"/>
</dbReference>
<dbReference type="GO" id="GO:0000398">
    <property type="term" value="P:mRNA splicing, via spliceosome"/>
    <property type="evidence" value="ECO:0000318"/>
    <property type="project" value="GO_Central"/>
</dbReference>
<dbReference type="CDD" id="cd18787">
    <property type="entry name" value="SF2_C_DEAD"/>
    <property type="match status" value="1"/>
</dbReference>
<dbReference type="FunFam" id="3.40.50.300:FF:000849">
    <property type="entry name" value="ATP-dependent RNA helicase DBP5"/>
    <property type="match status" value="1"/>
</dbReference>
<dbReference type="FunFam" id="3.40.50.300:FF:000031">
    <property type="entry name" value="Eukaryotic initiation factor 4A-III"/>
    <property type="match status" value="1"/>
</dbReference>
<dbReference type="Gene3D" id="3.40.50.300">
    <property type="entry name" value="P-loop containing nucleotide triphosphate hydrolases"/>
    <property type="match status" value="2"/>
</dbReference>
<dbReference type="InterPro" id="IPR011545">
    <property type="entry name" value="DEAD/DEAH_box_helicase_dom"/>
</dbReference>
<dbReference type="InterPro" id="IPR014001">
    <property type="entry name" value="Helicase_ATP-bd"/>
</dbReference>
<dbReference type="InterPro" id="IPR001650">
    <property type="entry name" value="Helicase_C-like"/>
</dbReference>
<dbReference type="InterPro" id="IPR027417">
    <property type="entry name" value="P-loop_NTPase"/>
</dbReference>
<dbReference type="InterPro" id="IPR000629">
    <property type="entry name" value="RNA-helicase_DEAD-box_CS"/>
</dbReference>
<dbReference type="InterPro" id="IPR014014">
    <property type="entry name" value="RNA_helicase_DEAD_Q_motif"/>
</dbReference>
<dbReference type="PANTHER" id="PTHR47958">
    <property type="entry name" value="ATP-DEPENDENT RNA HELICASE DBP3"/>
    <property type="match status" value="1"/>
</dbReference>
<dbReference type="Pfam" id="PF00270">
    <property type="entry name" value="DEAD"/>
    <property type="match status" value="1"/>
</dbReference>
<dbReference type="Pfam" id="PF00271">
    <property type="entry name" value="Helicase_C"/>
    <property type="match status" value="1"/>
</dbReference>
<dbReference type="SMART" id="SM00487">
    <property type="entry name" value="DEXDc"/>
    <property type="match status" value="1"/>
</dbReference>
<dbReference type="SMART" id="SM00490">
    <property type="entry name" value="HELICc"/>
    <property type="match status" value="1"/>
</dbReference>
<dbReference type="SUPFAM" id="SSF52540">
    <property type="entry name" value="P-loop containing nucleoside triphosphate hydrolases"/>
    <property type="match status" value="1"/>
</dbReference>
<dbReference type="PROSITE" id="PS00039">
    <property type="entry name" value="DEAD_ATP_HELICASE"/>
    <property type="match status" value="1"/>
</dbReference>
<dbReference type="PROSITE" id="PS51192">
    <property type="entry name" value="HELICASE_ATP_BIND_1"/>
    <property type="match status" value="1"/>
</dbReference>
<dbReference type="PROSITE" id="PS51194">
    <property type="entry name" value="HELICASE_CTER"/>
    <property type="match status" value="1"/>
</dbReference>
<dbReference type="PROSITE" id="PS51195">
    <property type="entry name" value="Q_MOTIF"/>
    <property type="match status" value="1"/>
</dbReference>
<reference key="1">
    <citation type="submission" date="1999-11" db="EMBL/GenBank/DDBJ databases">
        <title>A novel method for systematic identification of genes required for growth of Candida albicans.</title>
        <authorList>
            <person name="De Backer M.D."/>
            <person name="Logghe M."/>
            <person name="Viaene J."/>
            <person name="Loonen I."/>
            <person name="Vandoninck S."/>
            <person name="de Hoogt R."/>
            <person name="Nelissen B."/>
            <person name="De Waele S."/>
            <person name="Simons F."/>
            <person name="Contreras R."/>
            <person name="Luyten W."/>
        </authorList>
    </citation>
    <scope>NUCLEOTIDE SEQUENCE [GENOMIC DNA]</scope>
    <source>
        <strain>B2630</strain>
    </source>
</reference>
<reference key="2">
    <citation type="journal article" date="2004" name="Proc. Natl. Acad. Sci. U.S.A.">
        <title>The diploid genome sequence of Candida albicans.</title>
        <authorList>
            <person name="Jones T."/>
            <person name="Federspiel N.A."/>
            <person name="Chibana H."/>
            <person name="Dungan J."/>
            <person name="Kalman S."/>
            <person name="Magee B.B."/>
            <person name="Newport G."/>
            <person name="Thorstenson Y.R."/>
            <person name="Agabian N."/>
            <person name="Magee P.T."/>
            <person name="Davis R.W."/>
            <person name="Scherer S."/>
        </authorList>
    </citation>
    <scope>NUCLEOTIDE SEQUENCE [LARGE SCALE GENOMIC DNA]</scope>
    <source>
        <strain>SC5314 / ATCC MYA-2876</strain>
    </source>
</reference>
<reference key="3">
    <citation type="journal article" date="2007" name="Genome Biol.">
        <title>Assembly of the Candida albicans genome into sixteen supercontigs aligned on the eight chromosomes.</title>
        <authorList>
            <person name="van het Hoog M."/>
            <person name="Rast T.J."/>
            <person name="Martchenko M."/>
            <person name="Grindle S."/>
            <person name="Dignard D."/>
            <person name="Hogues H."/>
            <person name="Cuomo C."/>
            <person name="Berriman M."/>
            <person name="Scherer S."/>
            <person name="Magee B.B."/>
            <person name="Whiteway M."/>
            <person name="Chibana H."/>
            <person name="Nantel A."/>
            <person name="Magee P.T."/>
        </authorList>
    </citation>
    <scope>GENOME REANNOTATION</scope>
    <source>
        <strain>SC5314 / ATCC MYA-2876</strain>
    </source>
</reference>
<reference key="4">
    <citation type="journal article" date="2013" name="Genome Biol.">
        <title>Assembly of a phased diploid Candida albicans genome facilitates allele-specific measurements and provides a simple model for repeat and indel structure.</title>
        <authorList>
            <person name="Muzzey D."/>
            <person name="Schwartz K."/>
            <person name="Weissman J.S."/>
            <person name="Sherlock G."/>
        </authorList>
    </citation>
    <scope>NUCLEOTIDE SEQUENCE [LARGE SCALE GENOMIC DNA]</scope>
    <scope>GENOME REANNOTATION</scope>
    <source>
        <strain>SC5314 / ATCC MYA-2876</strain>
    </source>
</reference>
<keyword id="KW-0067">ATP-binding</keyword>
<keyword id="KW-0347">Helicase</keyword>
<keyword id="KW-0378">Hydrolase</keyword>
<keyword id="KW-0547">Nucleotide-binding</keyword>
<keyword id="KW-0539">Nucleus</keyword>
<keyword id="KW-1185">Reference proteome</keyword>
<keyword id="KW-0690">Ribosome biogenesis</keyword>
<keyword id="KW-0694">RNA-binding</keyword>
<keyword id="KW-0698">rRNA processing</keyword>
<protein>
    <recommendedName>
        <fullName>ATP-dependent RNA helicase FAL1</fullName>
        <ecNumber>3.6.4.13</ecNumber>
    </recommendedName>
</protein>
<accession>Q5A9Z6</accession>
<accession>A0A1D8PDK9</accession>
<accession>Q9UVI5</accession>
<proteinExistence type="inferred from homology"/>
<evidence type="ECO:0000250" key="1"/>
<evidence type="ECO:0000255" key="2">
    <source>
        <dbReference type="PROSITE-ProRule" id="PRU00541"/>
    </source>
</evidence>
<evidence type="ECO:0000255" key="3">
    <source>
        <dbReference type="PROSITE-ProRule" id="PRU00542"/>
    </source>
</evidence>
<evidence type="ECO:0000305" key="4"/>
<gene>
    <name type="primary">FAL1</name>
    <name type="ordered locus">CAALFM_C105640CA</name>
    <name type="ORF">CaO19.10024</name>
    <name type="ORF">CaO19.2488</name>
</gene>